<accession>C3K2V9</accession>
<comment type="function">
    <text evidence="1">With S4 and S12 plays an important role in translational accuracy.</text>
</comment>
<comment type="function">
    <text evidence="1">Located at the back of the 30S subunit body where it stabilizes the conformation of the head with respect to the body.</text>
</comment>
<comment type="subunit">
    <text evidence="1">Part of the 30S ribosomal subunit. Contacts proteins S4 and S8.</text>
</comment>
<comment type="domain">
    <text>The N-terminal domain interacts with the head of the 30S subunit; the C-terminal domain interacts with the body and contacts protein S4. The interaction surface between S4 and S5 is involved in control of translational fidelity.</text>
</comment>
<comment type="similarity">
    <text evidence="1">Belongs to the universal ribosomal protein uS5 family.</text>
</comment>
<proteinExistence type="inferred from homology"/>
<dbReference type="EMBL" id="AM181176">
    <property type="protein sequence ID" value="CAY52736.1"/>
    <property type="molecule type" value="Genomic_DNA"/>
</dbReference>
<dbReference type="RefSeq" id="WP_003176409.1">
    <property type="nucleotide sequence ID" value="NC_012660.1"/>
</dbReference>
<dbReference type="SMR" id="C3K2V9"/>
<dbReference type="STRING" id="294.SRM1_05162"/>
<dbReference type="GeneID" id="97919479"/>
<dbReference type="eggNOG" id="COG0098">
    <property type="taxonomic scope" value="Bacteria"/>
</dbReference>
<dbReference type="HOGENOM" id="CLU_065898_2_2_6"/>
<dbReference type="OrthoDB" id="9809045at2"/>
<dbReference type="GO" id="GO:0015935">
    <property type="term" value="C:small ribosomal subunit"/>
    <property type="evidence" value="ECO:0007669"/>
    <property type="project" value="InterPro"/>
</dbReference>
<dbReference type="GO" id="GO:0019843">
    <property type="term" value="F:rRNA binding"/>
    <property type="evidence" value="ECO:0007669"/>
    <property type="project" value="UniProtKB-UniRule"/>
</dbReference>
<dbReference type="GO" id="GO:0003735">
    <property type="term" value="F:structural constituent of ribosome"/>
    <property type="evidence" value="ECO:0007669"/>
    <property type="project" value="InterPro"/>
</dbReference>
<dbReference type="GO" id="GO:0006412">
    <property type="term" value="P:translation"/>
    <property type="evidence" value="ECO:0007669"/>
    <property type="project" value="UniProtKB-UniRule"/>
</dbReference>
<dbReference type="FunFam" id="3.30.160.20:FF:000001">
    <property type="entry name" value="30S ribosomal protein S5"/>
    <property type="match status" value="1"/>
</dbReference>
<dbReference type="FunFam" id="3.30.230.10:FF:000002">
    <property type="entry name" value="30S ribosomal protein S5"/>
    <property type="match status" value="1"/>
</dbReference>
<dbReference type="Gene3D" id="3.30.160.20">
    <property type="match status" value="1"/>
</dbReference>
<dbReference type="Gene3D" id="3.30.230.10">
    <property type="match status" value="1"/>
</dbReference>
<dbReference type="HAMAP" id="MF_01307_B">
    <property type="entry name" value="Ribosomal_uS5_B"/>
    <property type="match status" value="1"/>
</dbReference>
<dbReference type="InterPro" id="IPR020568">
    <property type="entry name" value="Ribosomal_Su5_D2-typ_SF"/>
</dbReference>
<dbReference type="InterPro" id="IPR000851">
    <property type="entry name" value="Ribosomal_uS5"/>
</dbReference>
<dbReference type="InterPro" id="IPR005712">
    <property type="entry name" value="Ribosomal_uS5_bac-type"/>
</dbReference>
<dbReference type="InterPro" id="IPR005324">
    <property type="entry name" value="Ribosomal_uS5_C"/>
</dbReference>
<dbReference type="InterPro" id="IPR013810">
    <property type="entry name" value="Ribosomal_uS5_N"/>
</dbReference>
<dbReference type="InterPro" id="IPR018192">
    <property type="entry name" value="Ribosomal_uS5_N_CS"/>
</dbReference>
<dbReference type="InterPro" id="IPR014721">
    <property type="entry name" value="Ribsml_uS5_D2-typ_fold_subgr"/>
</dbReference>
<dbReference type="NCBIfam" id="TIGR01021">
    <property type="entry name" value="rpsE_bact"/>
    <property type="match status" value="1"/>
</dbReference>
<dbReference type="PANTHER" id="PTHR48432">
    <property type="entry name" value="S5 DRBM DOMAIN-CONTAINING PROTEIN"/>
    <property type="match status" value="1"/>
</dbReference>
<dbReference type="PANTHER" id="PTHR48432:SF1">
    <property type="entry name" value="S5 DRBM DOMAIN-CONTAINING PROTEIN"/>
    <property type="match status" value="1"/>
</dbReference>
<dbReference type="Pfam" id="PF00333">
    <property type="entry name" value="Ribosomal_S5"/>
    <property type="match status" value="1"/>
</dbReference>
<dbReference type="Pfam" id="PF03719">
    <property type="entry name" value="Ribosomal_S5_C"/>
    <property type="match status" value="1"/>
</dbReference>
<dbReference type="SUPFAM" id="SSF54768">
    <property type="entry name" value="dsRNA-binding domain-like"/>
    <property type="match status" value="1"/>
</dbReference>
<dbReference type="SUPFAM" id="SSF54211">
    <property type="entry name" value="Ribosomal protein S5 domain 2-like"/>
    <property type="match status" value="1"/>
</dbReference>
<dbReference type="PROSITE" id="PS00585">
    <property type="entry name" value="RIBOSOMAL_S5"/>
    <property type="match status" value="1"/>
</dbReference>
<dbReference type="PROSITE" id="PS50881">
    <property type="entry name" value="S5_DSRBD"/>
    <property type="match status" value="1"/>
</dbReference>
<reference key="1">
    <citation type="journal article" date="2009" name="Genome Biol.">
        <title>Genomic and genetic analyses of diversity and plant interactions of Pseudomonas fluorescens.</title>
        <authorList>
            <person name="Silby M.W."/>
            <person name="Cerdeno-Tarraga A.M."/>
            <person name="Vernikos G.S."/>
            <person name="Giddens S.R."/>
            <person name="Jackson R.W."/>
            <person name="Preston G.M."/>
            <person name="Zhang X.-X."/>
            <person name="Moon C.D."/>
            <person name="Gehrig S.M."/>
            <person name="Godfrey S.A.C."/>
            <person name="Knight C.G."/>
            <person name="Malone J.G."/>
            <person name="Robinson Z."/>
            <person name="Spiers A.J."/>
            <person name="Harris S."/>
            <person name="Challis G.L."/>
            <person name="Yaxley A.M."/>
            <person name="Harris D."/>
            <person name="Seeger K."/>
            <person name="Murphy L."/>
            <person name="Rutter S."/>
            <person name="Squares R."/>
            <person name="Quail M.A."/>
            <person name="Saunders E."/>
            <person name="Mavromatis K."/>
            <person name="Brettin T.S."/>
            <person name="Bentley S.D."/>
            <person name="Hothersall J."/>
            <person name="Stephens E."/>
            <person name="Thomas C.M."/>
            <person name="Parkhill J."/>
            <person name="Levy S.B."/>
            <person name="Rainey P.B."/>
            <person name="Thomson N.R."/>
        </authorList>
    </citation>
    <scope>NUCLEOTIDE SEQUENCE [LARGE SCALE GENOMIC DNA]</scope>
    <source>
        <strain>SBW25</strain>
    </source>
</reference>
<organism>
    <name type="scientific">Pseudomonas fluorescens (strain SBW25)</name>
    <dbReference type="NCBI Taxonomy" id="216595"/>
    <lineage>
        <taxon>Bacteria</taxon>
        <taxon>Pseudomonadati</taxon>
        <taxon>Pseudomonadota</taxon>
        <taxon>Gammaproteobacteria</taxon>
        <taxon>Pseudomonadales</taxon>
        <taxon>Pseudomonadaceae</taxon>
        <taxon>Pseudomonas</taxon>
    </lineage>
</organism>
<sequence length="166" mass="17686">MSNNDQKRDEGYIEKLVQVNRVAKTVKGGRIFTFTALTVVGDGKGRVGFGRGKSREVPAAIQKAMEAARRNMIQVDLNGTTLQYAMKSAHGASKVYMQPASEGTGIIAGGAMRAVLEVAGVQNVLAKCYGSTNPVNVVHATFKGLKAMQSPESIAAKRGLTVKEIF</sequence>
<evidence type="ECO:0000255" key="1">
    <source>
        <dbReference type="HAMAP-Rule" id="MF_01307"/>
    </source>
</evidence>
<evidence type="ECO:0000305" key="2"/>
<keyword id="KW-0687">Ribonucleoprotein</keyword>
<keyword id="KW-0689">Ribosomal protein</keyword>
<keyword id="KW-0694">RNA-binding</keyword>
<keyword id="KW-0699">rRNA-binding</keyword>
<name>RS5_PSEFS</name>
<protein>
    <recommendedName>
        <fullName evidence="1">Small ribosomal subunit protein uS5</fullName>
    </recommendedName>
    <alternativeName>
        <fullName evidence="2">30S ribosomal protein S5</fullName>
    </alternativeName>
</protein>
<gene>
    <name evidence="1" type="primary">rpsE</name>
    <name type="ordered locus">PFLU_5510</name>
</gene>
<feature type="chain" id="PRO_1000214322" description="Small ribosomal subunit protein uS5">
    <location>
        <begin position="1"/>
        <end position="166"/>
    </location>
</feature>
<feature type="domain" description="S5 DRBM" evidence="1">
    <location>
        <begin position="12"/>
        <end position="75"/>
    </location>
</feature>